<evidence type="ECO:0000250" key="1"/>
<evidence type="ECO:0000269" key="2">
    <source>
    </source>
</evidence>
<evidence type="ECO:0000305" key="3"/>
<protein>
    <recommendedName>
        <fullName>Histone chaperone ASF1B</fullName>
    </recommendedName>
    <alternativeName>
        <fullName>Anti-silencing function protein 1-like protein b</fullName>
        <shortName>Anti-silencing function 1b protein</shortName>
    </alternativeName>
    <alternativeName>
        <fullName>Silencing group A protein 1</fullName>
    </alternativeName>
</protein>
<accession>Q9LS09</accession>
<reference key="1">
    <citation type="submission" date="2002-01" db="EMBL/GenBank/DDBJ databases">
        <title>Arabidopsis thaliana ASF1 genes.</title>
        <authorList>
            <person name="Kaya H."/>
            <person name="Lee J."/>
            <person name="Araki T."/>
            <person name="Shibahara K."/>
        </authorList>
    </citation>
    <scope>NUCLEOTIDE SEQUENCE [MRNA]</scope>
    <source>
        <strain>cv. Columbia</strain>
    </source>
</reference>
<reference key="2">
    <citation type="submission" date="1999-06" db="EMBL/GenBank/DDBJ databases">
        <title>Structural analysis of Arabidopsis thaliana chromosome 5. XI.</title>
        <authorList>
            <person name="Kaneko T."/>
            <person name="Katoh T."/>
            <person name="Asamizu E."/>
            <person name="Sato S."/>
            <person name="Nakamura Y."/>
            <person name="Kotani H."/>
            <person name="Tabata S."/>
        </authorList>
    </citation>
    <scope>NUCLEOTIDE SEQUENCE [LARGE SCALE GENOMIC DNA]</scope>
    <source>
        <strain>cv. Columbia</strain>
    </source>
</reference>
<reference key="3">
    <citation type="journal article" date="2017" name="Plant J.">
        <title>Araport11: a complete reannotation of the Arabidopsis thaliana reference genome.</title>
        <authorList>
            <person name="Cheng C.Y."/>
            <person name="Krishnakumar V."/>
            <person name="Chan A.P."/>
            <person name="Thibaud-Nissen F."/>
            <person name="Schobel S."/>
            <person name="Town C.D."/>
        </authorList>
    </citation>
    <scope>GENOME REANNOTATION</scope>
    <source>
        <strain>cv. Columbia</strain>
    </source>
</reference>
<reference key="4">
    <citation type="journal article" date="2003" name="Science">
        <title>Empirical analysis of transcriptional activity in the Arabidopsis genome.</title>
        <authorList>
            <person name="Yamada K."/>
            <person name="Lim J."/>
            <person name="Dale J.M."/>
            <person name="Chen H."/>
            <person name="Shinn P."/>
            <person name="Palm C.J."/>
            <person name="Southwick A.M."/>
            <person name="Wu H.C."/>
            <person name="Kim C.J."/>
            <person name="Nguyen M."/>
            <person name="Pham P.K."/>
            <person name="Cheuk R.F."/>
            <person name="Karlin-Newmann G."/>
            <person name="Liu S.X."/>
            <person name="Lam B."/>
            <person name="Sakano H."/>
            <person name="Wu T."/>
            <person name="Yu G."/>
            <person name="Miranda M."/>
            <person name="Quach H.L."/>
            <person name="Tripp M."/>
            <person name="Chang C.H."/>
            <person name="Lee J.M."/>
            <person name="Toriumi M.J."/>
            <person name="Chan M.M."/>
            <person name="Tang C.C."/>
            <person name="Onodera C.S."/>
            <person name="Deng J.M."/>
            <person name="Akiyama K."/>
            <person name="Ansari Y."/>
            <person name="Arakawa T."/>
            <person name="Banh J."/>
            <person name="Banno F."/>
            <person name="Bowser L."/>
            <person name="Brooks S.Y."/>
            <person name="Carninci P."/>
            <person name="Chao Q."/>
            <person name="Choy N."/>
            <person name="Enju A."/>
            <person name="Goldsmith A.D."/>
            <person name="Gurjal M."/>
            <person name="Hansen N.F."/>
            <person name="Hayashizaki Y."/>
            <person name="Johnson-Hopson C."/>
            <person name="Hsuan V.W."/>
            <person name="Iida K."/>
            <person name="Karnes M."/>
            <person name="Khan S."/>
            <person name="Koesema E."/>
            <person name="Ishida J."/>
            <person name="Jiang P.X."/>
            <person name="Jones T."/>
            <person name="Kawai J."/>
            <person name="Kamiya A."/>
            <person name="Meyers C."/>
            <person name="Nakajima M."/>
            <person name="Narusaka M."/>
            <person name="Seki M."/>
            <person name="Sakurai T."/>
            <person name="Satou M."/>
            <person name="Tamse R."/>
            <person name="Vaysberg M."/>
            <person name="Wallender E.K."/>
            <person name="Wong C."/>
            <person name="Yamamura Y."/>
            <person name="Yuan S."/>
            <person name="Shinozaki K."/>
            <person name="Davis R.W."/>
            <person name="Theologis A."/>
            <person name="Ecker J.R."/>
        </authorList>
    </citation>
    <scope>NUCLEOTIDE SEQUENCE [LARGE SCALE MRNA]</scope>
    <source>
        <strain>cv. Columbia</strain>
    </source>
</reference>
<reference key="5">
    <citation type="submission" date="2002-03" db="EMBL/GenBank/DDBJ databases">
        <title>Full-length cDNA from Arabidopsis thaliana.</title>
        <authorList>
            <person name="Brover V.V."/>
            <person name="Troukhan M.E."/>
            <person name="Alexandrov N.A."/>
            <person name="Lu Y.-P."/>
            <person name="Flavell R.B."/>
            <person name="Feldmann K.A."/>
        </authorList>
    </citation>
    <scope>NUCLEOTIDE SEQUENCE [LARGE SCALE MRNA]</scope>
</reference>
<reference key="6">
    <citation type="journal article" date="2004" name="Plant Physiol.">
        <title>TOUSLED kinase activity oscillates during the cell cycle and interacts with chromatin regulators.</title>
        <authorList>
            <person name="Ehsan H."/>
            <person name="Reichheld J.-P."/>
            <person name="Durfee T."/>
            <person name="Roe J.L."/>
        </authorList>
    </citation>
    <scope>INTERACTION WITH TOUSLED</scope>
    <scope>PHOSPHORYLATION</scope>
    <source>
        <strain>cv. Columbia</strain>
    </source>
</reference>
<sequence length="218" mass="24701">MSSINITNVTVLDNPAPFVNPFQFEISYECLTSLKDDLEWKLIYVGSAEDETYDQVLESVLVGPVNVGNYRFVLQADSPDPLKIREEDIIGVTVLLLTCSYMDQEFIRVGYYVNNDYDDEQLREEPPTKVLIDKVQRNILTDKPRVTKFPINFHPENEQTLGDGPAPTEPFADSVVNGEAPVFLEQPQKLQEIEQFDDSDVNGEAIALLDQPQNLQET</sequence>
<dbReference type="EMBL" id="AB078340">
    <property type="protein sequence ID" value="BAC54104.1"/>
    <property type="molecule type" value="mRNA"/>
</dbReference>
<dbReference type="EMBL" id="AB028606">
    <property type="protein sequence ID" value="BAA97545.1"/>
    <property type="molecule type" value="Genomic_DNA"/>
</dbReference>
<dbReference type="EMBL" id="CP002688">
    <property type="protein sequence ID" value="AED94269.1"/>
    <property type="molecule type" value="Genomic_DNA"/>
</dbReference>
<dbReference type="EMBL" id="AY114716">
    <property type="protein sequence ID" value="AAM48035.1"/>
    <property type="molecule type" value="mRNA"/>
</dbReference>
<dbReference type="EMBL" id="AY072420">
    <property type="protein sequence ID" value="AAL62412.1"/>
    <property type="molecule type" value="mRNA"/>
</dbReference>
<dbReference type="EMBL" id="AY086448">
    <property type="protein sequence ID" value="AAM63451.1"/>
    <property type="molecule type" value="mRNA"/>
</dbReference>
<dbReference type="RefSeq" id="NP_198627.1">
    <property type="nucleotide sequence ID" value="NM_123171.4"/>
</dbReference>
<dbReference type="SMR" id="Q9LS09"/>
<dbReference type="BioGRID" id="19042">
    <property type="interactions" value="2"/>
</dbReference>
<dbReference type="FunCoup" id="Q9LS09">
    <property type="interactions" value="3337"/>
</dbReference>
<dbReference type="IntAct" id="Q9LS09">
    <property type="interactions" value="2"/>
</dbReference>
<dbReference type="STRING" id="3702.Q9LS09"/>
<dbReference type="GlyGen" id="Q9LS09">
    <property type="glycosylation" value="1 site"/>
</dbReference>
<dbReference type="PaxDb" id="3702-AT5G38110.1"/>
<dbReference type="ProteomicsDB" id="246678"/>
<dbReference type="EnsemblPlants" id="AT5G38110.1">
    <property type="protein sequence ID" value="AT5G38110.1"/>
    <property type="gene ID" value="AT5G38110"/>
</dbReference>
<dbReference type="GeneID" id="833791"/>
<dbReference type="Gramene" id="AT5G38110.1">
    <property type="protein sequence ID" value="AT5G38110.1"/>
    <property type="gene ID" value="AT5G38110"/>
</dbReference>
<dbReference type="KEGG" id="ath:AT5G38110"/>
<dbReference type="Araport" id="AT5G38110"/>
<dbReference type="TAIR" id="AT5G38110">
    <property type="gene designation" value="ASF1B"/>
</dbReference>
<dbReference type="eggNOG" id="KOG3265">
    <property type="taxonomic scope" value="Eukaryota"/>
</dbReference>
<dbReference type="HOGENOM" id="CLU_060354_0_1_1"/>
<dbReference type="InParanoid" id="Q9LS09"/>
<dbReference type="OMA" id="DYADQEM"/>
<dbReference type="OrthoDB" id="29755at2759"/>
<dbReference type="PhylomeDB" id="Q9LS09"/>
<dbReference type="PRO" id="PR:Q9LS09"/>
<dbReference type="Proteomes" id="UP000006548">
    <property type="component" value="Chromosome 5"/>
</dbReference>
<dbReference type="ExpressionAtlas" id="Q9LS09">
    <property type="expression patterns" value="baseline and differential"/>
</dbReference>
<dbReference type="GO" id="GO:0005737">
    <property type="term" value="C:cytoplasm"/>
    <property type="evidence" value="ECO:0000314"/>
    <property type="project" value="TAIR"/>
</dbReference>
<dbReference type="GO" id="GO:0005634">
    <property type="term" value="C:nucleus"/>
    <property type="evidence" value="ECO:0000314"/>
    <property type="project" value="TAIR"/>
</dbReference>
<dbReference type="GO" id="GO:0051301">
    <property type="term" value="P:cell division"/>
    <property type="evidence" value="ECO:0000315"/>
    <property type="project" value="TAIR"/>
</dbReference>
<dbReference type="GO" id="GO:0006325">
    <property type="term" value="P:chromatin organization"/>
    <property type="evidence" value="ECO:0007669"/>
    <property type="project" value="UniProtKB-KW"/>
</dbReference>
<dbReference type="GO" id="GO:0009294">
    <property type="term" value="P:DNA-mediated transformation"/>
    <property type="evidence" value="ECO:0000315"/>
    <property type="project" value="TAIR"/>
</dbReference>
<dbReference type="GO" id="GO:0000724">
    <property type="term" value="P:double-strand break repair via homologous recombination"/>
    <property type="evidence" value="ECO:0000315"/>
    <property type="project" value="TAIR"/>
</dbReference>
<dbReference type="GO" id="GO:0031567">
    <property type="term" value="P:mitotic cell size control checkpoint signaling"/>
    <property type="evidence" value="ECO:0000315"/>
    <property type="project" value="TAIR"/>
</dbReference>
<dbReference type="GO" id="GO:0008361">
    <property type="term" value="P:regulation of cell size"/>
    <property type="evidence" value="ECO:0000315"/>
    <property type="project" value="TAIR"/>
</dbReference>
<dbReference type="GO" id="GO:0010091">
    <property type="term" value="P:trichome branching"/>
    <property type="evidence" value="ECO:0000315"/>
    <property type="project" value="TAIR"/>
</dbReference>
<dbReference type="FunFam" id="2.60.40.1490:FF:000001">
    <property type="entry name" value="Histone chaperone ASF1"/>
    <property type="match status" value="1"/>
</dbReference>
<dbReference type="Gene3D" id="2.60.40.1490">
    <property type="entry name" value="Histone chaperone ASF1-like"/>
    <property type="match status" value="1"/>
</dbReference>
<dbReference type="InterPro" id="IPR006818">
    <property type="entry name" value="ASF1-like"/>
</dbReference>
<dbReference type="InterPro" id="IPR036747">
    <property type="entry name" value="ASF1-like_sf"/>
</dbReference>
<dbReference type="PANTHER" id="PTHR12040">
    <property type="entry name" value="ANTI-SILENCING PROTEIN 1"/>
    <property type="match status" value="1"/>
</dbReference>
<dbReference type="PANTHER" id="PTHR12040:SF18">
    <property type="entry name" value="HISTONE CHAPERONE ASF1B"/>
    <property type="match status" value="1"/>
</dbReference>
<dbReference type="Pfam" id="PF04729">
    <property type="entry name" value="ASF1_hist_chap"/>
    <property type="match status" value="1"/>
</dbReference>
<dbReference type="SUPFAM" id="SSF101546">
    <property type="entry name" value="ASF1-like"/>
    <property type="match status" value="1"/>
</dbReference>
<feature type="chain" id="PRO_0000270798" description="Histone chaperone ASF1B">
    <location>
        <begin position="1"/>
        <end position="218"/>
    </location>
</feature>
<keyword id="KW-0143">Chaperone</keyword>
<keyword id="KW-0156">Chromatin regulator</keyword>
<keyword id="KW-0539">Nucleus</keyword>
<keyword id="KW-0597">Phosphoprotein</keyword>
<keyword id="KW-1185">Reference proteome</keyword>
<keyword id="KW-0804">Transcription</keyword>
<keyword id="KW-0805">Transcription regulation</keyword>
<proteinExistence type="evidence at protein level"/>
<gene>
    <name type="primary">ASF1B</name>
    <name type="synonym">SGA01</name>
    <name type="synonym">SGA1</name>
    <name type="ordered locus">At5g38110</name>
    <name type="ORF">F16F17.110</name>
</gene>
<comment type="function">
    <text evidence="1">Histone chaperone that facilitates histone deposition and histone exchange and removal during nucleosome assembly and disassembly.</text>
</comment>
<comment type="subunit">
    <text evidence="1 2">Interacts with histone H3 and histone H4 (By similarity). Interacts strongly with the N-terminus of TOUSLED.</text>
</comment>
<comment type="interaction">
    <interactant intactId="EBI-2366572">
        <id>Q9LS09</id>
    </interactant>
    <interactant intactId="EBI-2325484">
        <id>Q39238</id>
        <label>TOUSLED</label>
    </interactant>
    <organismsDiffer>false</organismsDiffer>
    <experiments>2</experiments>
</comment>
<comment type="subcellular location">
    <subcellularLocation>
        <location evidence="1">Nucleus</location>
    </subcellularLocation>
</comment>
<comment type="PTM">
    <text evidence="2">Phosphorylated in vitro by TOUSLED.</text>
</comment>
<comment type="similarity">
    <text evidence="3">Belongs to the ASF1 family.</text>
</comment>
<organism>
    <name type="scientific">Arabidopsis thaliana</name>
    <name type="common">Mouse-ear cress</name>
    <dbReference type="NCBI Taxonomy" id="3702"/>
    <lineage>
        <taxon>Eukaryota</taxon>
        <taxon>Viridiplantae</taxon>
        <taxon>Streptophyta</taxon>
        <taxon>Embryophyta</taxon>
        <taxon>Tracheophyta</taxon>
        <taxon>Spermatophyta</taxon>
        <taxon>Magnoliopsida</taxon>
        <taxon>eudicotyledons</taxon>
        <taxon>Gunneridae</taxon>
        <taxon>Pentapetalae</taxon>
        <taxon>rosids</taxon>
        <taxon>malvids</taxon>
        <taxon>Brassicales</taxon>
        <taxon>Brassicaceae</taxon>
        <taxon>Camelineae</taxon>
        <taxon>Arabidopsis</taxon>
    </lineage>
</organism>
<name>ASF1B_ARATH</name>